<reference key="1">
    <citation type="journal article" date="2004" name="Gene">
        <title>Secreted subtilisin gene family in Trichophyton rubrum.</title>
        <authorList>
            <person name="Jousson O."/>
            <person name="Lechenne B."/>
            <person name="Bontems O."/>
            <person name="Mignon B."/>
            <person name="Reichard U."/>
            <person name="Barblan J."/>
            <person name="Quadroni M."/>
            <person name="Monod M."/>
        </authorList>
    </citation>
    <scope>NUCLEOTIDE SEQUENCE [GENOMIC DNA]</scope>
    <scope>IDENTIFICATION BY MASS SPECTROMETRY</scope>
    <scope>SUBCELLULAR LOCATION</scope>
</reference>
<accession>Q64K36</accession>
<keyword id="KW-0325">Glycoprotein</keyword>
<keyword id="KW-0378">Hydrolase</keyword>
<keyword id="KW-0645">Protease</keyword>
<keyword id="KW-0964">Secreted</keyword>
<keyword id="KW-0720">Serine protease</keyword>
<keyword id="KW-0732">Signal</keyword>
<keyword id="KW-0843">Virulence</keyword>
<keyword id="KW-0865">Zymogen</keyword>
<organism>
    <name type="scientific">Arthroderma benhamiae</name>
    <name type="common">Trichophyton mentagrophytes</name>
    <dbReference type="NCBI Taxonomy" id="63400"/>
    <lineage>
        <taxon>Eukaryota</taxon>
        <taxon>Fungi</taxon>
        <taxon>Dikarya</taxon>
        <taxon>Ascomycota</taxon>
        <taxon>Pezizomycotina</taxon>
        <taxon>Eurotiomycetes</taxon>
        <taxon>Eurotiomycetidae</taxon>
        <taxon>Onygenales</taxon>
        <taxon>Arthrodermataceae</taxon>
        <taxon>Trichophyton</taxon>
    </lineage>
</organism>
<gene>
    <name type="primary">SUB7</name>
</gene>
<sequence length="400" mass="41581">MGFITKAIPLALAAASVINGAEIMETRAGVQTLADKYIVVMNDGMTDKDFDSHRSWVNRTHRRRLIRRGAKAMGGMKHTYRFPTGLKGYSGHFDEQMINEISKRADVKYIERDARVQINAIEQQDNVPSWGLARVGSKEPGGTTYYYDGTAGEGSTAYVIDTGTDIQHEEFEGRATWGANFVDDMDMDCNGHGTHVSGTIGGKTFGVAKKSNVVAVKVLDCNGSGSNSGVIMGMEWATKDAQQKGADKAVANMSLGGAFSQASNDAAAAIAKGGVFLAVAAGNDNVDAADSSPASEPSICTVAASTEQDSKADFSNFGQVVDVYAPGDSITSAKPGGGSQVLSGTSMATPHVAGLGAYLIGLGKGGGPGLCDTIKQTAIDVIQNPGASTTSKLINNGSGM</sequence>
<evidence type="ECO:0000250" key="1"/>
<evidence type="ECO:0000255" key="2"/>
<evidence type="ECO:0000255" key="3">
    <source>
        <dbReference type="PROSITE-ProRule" id="PRU01240"/>
    </source>
</evidence>
<evidence type="ECO:0000269" key="4">
    <source>
    </source>
</evidence>
<evidence type="ECO:0000305" key="5"/>
<name>SUB7_ARTBE</name>
<feature type="signal peptide" evidence="2">
    <location>
        <begin position="1"/>
        <end position="20"/>
    </location>
</feature>
<feature type="propeptide" id="PRO_0000380818" evidence="1">
    <location>
        <begin position="21"/>
        <end position="119"/>
    </location>
</feature>
<feature type="chain" id="PRO_0000380819" description="Subtilisin-like protease 7">
    <location>
        <begin position="120"/>
        <end position="400"/>
    </location>
</feature>
<feature type="domain" description="Inhibitor I9" evidence="2">
    <location>
        <begin position="36"/>
        <end position="118"/>
    </location>
</feature>
<feature type="domain" description="Peptidase S8" evidence="3">
    <location>
        <begin position="129"/>
        <end position="400"/>
    </location>
</feature>
<feature type="active site" description="Charge relay system" evidence="3">
    <location>
        <position position="161"/>
    </location>
</feature>
<feature type="active site" description="Charge relay system" evidence="3">
    <location>
        <position position="192"/>
    </location>
</feature>
<feature type="active site" description="Charge relay system" evidence="3">
    <location>
        <position position="346"/>
    </location>
</feature>
<feature type="glycosylation site" description="N-linked (GlcNAc...) asparagine" evidence="2">
    <location>
        <position position="58"/>
    </location>
</feature>
<feature type="glycosylation site" description="N-linked (GlcNAc...) asparagine" evidence="2">
    <location>
        <position position="222"/>
    </location>
</feature>
<feature type="glycosylation site" description="N-linked (GlcNAc...) asparagine" evidence="2">
    <location>
        <position position="252"/>
    </location>
</feature>
<feature type="glycosylation site" description="N-linked (GlcNAc...) asparagine" evidence="2">
    <location>
        <position position="396"/>
    </location>
</feature>
<proteinExistence type="evidence at protein level"/>
<protein>
    <recommendedName>
        <fullName>Subtilisin-like protease 7</fullName>
        <ecNumber>3.4.21.-</ecNumber>
    </recommendedName>
</protein>
<comment type="function">
    <text evidence="1">Secreted subtilisin-like serine protease with keratinolytic activity that contributes to pathogenicity.</text>
</comment>
<comment type="subcellular location">
    <subcellularLocation>
        <location evidence="4">Secreted</location>
    </subcellularLocation>
</comment>
<comment type="similarity">
    <text evidence="5">Belongs to the peptidase S8 family.</text>
</comment>
<dbReference type="EC" id="3.4.21.-"/>
<dbReference type="EMBL" id="AY437852">
    <property type="protein sequence ID" value="AAS45666.1"/>
    <property type="molecule type" value="Genomic_DNA"/>
</dbReference>
<dbReference type="SMR" id="Q64K36"/>
<dbReference type="GlyCosmos" id="Q64K36">
    <property type="glycosylation" value="4 sites, No reported glycans"/>
</dbReference>
<dbReference type="GO" id="GO:0005576">
    <property type="term" value="C:extracellular region"/>
    <property type="evidence" value="ECO:0007669"/>
    <property type="project" value="UniProtKB-SubCell"/>
</dbReference>
<dbReference type="GO" id="GO:0004252">
    <property type="term" value="F:serine-type endopeptidase activity"/>
    <property type="evidence" value="ECO:0007669"/>
    <property type="project" value="InterPro"/>
</dbReference>
<dbReference type="GO" id="GO:0006508">
    <property type="term" value="P:proteolysis"/>
    <property type="evidence" value="ECO:0007669"/>
    <property type="project" value="UniProtKB-KW"/>
</dbReference>
<dbReference type="CDD" id="cd04077">
    <property type="entry name" value="Peptidases_S8_PCSK9_ProteinaseK_like"/>
    <property type="match status" value="1"/>
</dbReference>
<dbReference type="FunFam" id="3.40.50.200:FF:000014">
    <property type="entry name" value="Proteinase K"/>
    <property type="match status" value="1"/>
</dbReference>
<dbReference type="Gene3D" id="3.30.70.80">
    <property type="entry name" value="Peptidase S8 propeptide/proteinase inhibitor I9"/>
    <property type="match status" value="1"/>
</dbReference>
<dbReference type="Gene3D" id="3.40.50.200">
    <property type="entry name" value="Peptidase S8/S53 domain"/>
    <property type="match status" value="1"/>
</dbReference>
<dbReference type="InterPro" id="IPR034193">
    <property type="entry name" value="PCSK9_ProteinaseK-like"/>
</dbReference>
<dbReference type="InterPro" id="IPR000209">
    <property type="entry name" value="Peptidase_S8/S53_dom"/>
</dbReference>
<dbReference type="InterPro" id="IPR036852">
    <property type="entry name" value="Peptidase_S8/S53_dom_sf"/>
</dbReference>
<dbReference type="InterPro" id="IPR022398">
    <property type="entry name" value="Peptidase_S8_His-AS"/>
</dbReference>
<dbReference type="InterPro" id="IPR023828">
    <property type="entry name" value="Peptidase_S8_Ser-AS"/>
</dbReference>
<dbReference type="InterPro" id="IPR050131">
    <property type="entry name" value="Peptidase_S8_subtilisin-like"/>
</dbReference>
<dbReference type="InterPro" id="IPR015500">
    <property type="entry name" value="Peptidase_S8_subtilisin-rel"/>
</dbReference>
<dbReference type="InterPro" id="IPR010259">
    <property type="entry name" value="S8pro/Inhibitor_I9"/>
</dbReference>
<dbReference type="InterPro" id="IPR037045">
    <property type="entry name" value="S8pro/Inhibitor_I9_sf"/>
</dbReference>
<dbReference type="PANTHER" id="PTHR43806:SF11">
    <property type="entry name" value="CEREVISIN-RELATED"/>
    <property type="match status" value="1"/>
</dbReference>
<dbReference type="PANTHER" id="PTHR43806">
    <property type="entry name" value="PEPTIDASE S8"/>
    <property type="match status" value="1"/>
</dbReference>
<dbReference type="Pfam" id="PF05922">
    <property type="entry name" value="Inhibitor_I9"/>
    <property type="match status" value="1"/>
</dbReference>
<dbReference type="Pfam" id="PF00082">
    <property type="entry name" value="Peptidase_S8"/>
    <property type="match status" value="1"/>
</dbReference>
<dbReference type="PRINTS" id="PR00723">
    <property type="entry name" value="SUBTILISIN"/>
</dbReference>
<dbReference type="SUPFAM" id="SSF54897">
    <property type="entry name" value="Protease propeptides/inhibitors"/>
    <property type="match status" value="1"/>
</dbReference>
<dbReference type="SUPFAM" id="SSF52743">
    <property type="entry name" value="Subtilisin-like"/>
    <property type="match status" value="1"/>
</dbReference>
<dbReference type="PROSITE" id="PS51892">
    <property type="entry name" value="SUBTILASE"/>
    <property type="match status" value="1"/>
</dbReference>
<dbReference type="PROSITE" id="PS00137">
    <property type="entry name" value="SUBTILASE_HIS"/>
    <property type="match status" value="1"/>
</dbReference>
<dbReference type="PROSITE" id="PS00138">
    <property type="entry name" value="SUBTILASE_SER"/>
    <property type="match status" value="1"/>
</dbReference>